<keyword id="KW-0067">ATP-binding</keyword>
<keyword id="KW-0143">Chaperone</keyword>
<keyword id="KW-0175">Coiled coil</keyword>
<keyword id="KW-0963">Cytoplasm</keyword>
<keyword id="KW-0547">Nucleotide-binding</keyword>
<keyword id="KW-0539">Nucleus</keyword>
<keyword id="KW-1185">Reference proteome</keyword>
<keyword id="KW-0677">Repeat</keyword>
<keyword id="KW-0346">Stress response</keyword>
<proteinExistence type="inferred from homology"/>
<gene>
    <name type="primary">hsp104</name>
    <name type="ORF">SPBC16D10.08c</name>
</gene>
<feature type="chain" id="PRO_0000372308" description="Heat shock protein 104">
    <location>
        <begin position="1"/>
        <end position="905"/>
    </location>
</feature>
<feature type="domain" description="Clp R" evidence="3">
    <location>
        <begin position="2"/>
        <end position="149"/>
    </location>
</feature>
<feature type="region of interest" description="Repeat 1" evidence="3">
    <location>
        <begin position="6"/>
        <end position="75"/>
    </location>
</feature>
<feature type="region of interest" description="Repeat 2" evidence="3">
    <location>
        <begin position="87"/>
        <end position="149"/>
    </location>
</feature>
<feature type="region of interest" description="NBD1" evidence="1">
    <location>
        <begin position="164"/>
        <end position="413"/>
    </location>
</feature>
<feature type="region of interest" description="Disordered" evidence="4">
    <location>
        <begin position="441"/>
        <end position="460"/>
    </location>
</feature>
<feature type="region of interest" description="NBD2" evidence="1">
    <location>
        <begin position="547"/>
        <end position="738"/>
    </location>
</feature>
<feature type="region of interest" description="Disordered" evidence="4">
    <location>
        <begin position="880"/>
        <end position="905"/>
    </location>
</feature>
<feature type="coiled-coil region" evidence="2">
    <location>
        <begin position="410"/>
        <end position="533"/>
    </location>
</feature>
<feature type="compositionally biased region" description="Acidic residues" evidence="4">
    <location>
        <begin position="890"/>
        <end position="905"/>
    </location>
</feature>
<feature type="binding site" evidence="2">
    <location>
        <begin position="209"/>
        <end position="216"/>
    </location>
    <ligand>
        <name>ATP</name>
        <dbReference type="ChEBI" id="CHEBI:30616"/>
        <label>1</label>
    </ligand>
</feature>
<feature type="binding site" evidence="2">
    <location>
        <begin position="621"/>
        <end position="628"/>
    </location>
    <ligand>
        <name>ATP</name>
        <dbReference type="ChEBI" id="CHEBI:30616"/>
        <label>2</label>
    </ligand>
</feature>
<accession>O94641</accession>
<dbReference type="EMBL" id="CU329671">
    <property type="protein sequence ID" value="CAB38512.1"/>
    <property type="molecule type" value="Genomic_DNA"/>
</dbReference>
<dbReference type="PIR" id="T39572">
    <property type="entry name" value="T39572"/>
</dbReference>
<dbReference type="RefSeq" id="NP_596503.1">
    <property type="nucleotide sequence ID" value="NM_001022424.2"/>
</dbReference>
<dbReference type="SMR" id="O94641"/>
<dbReference type="BioGRID" id="276570">
    <property type="interactions" value="35"/>
</dbReference>
<dbReference type="FunCoup" id="O94641">
    <property type="interactions" value="488"/>
</dbReference>
<dbReference type="STRING" id="284812.O94641"/>
<dbReference type="iPTMnet" id="O94641"/>
<dbReference type="PaxDb" id="4896-SPBC16D10.08c.1"/>
<dbReference type="EnsemblFungi" id="SPBC16D10.08c.1">
    <property type="protein sequence ID" value="SPBC16D10.08c.1:pep"/>
    <property type="gene ID" value="SPBC16D10.08c"/>
</dbReference>
<dbReference type="GeneID" id="2540026"/>
<dbReference type="KEGG" id="spo:2540026"/>
<dbReference type="PomBase" id="SPBC16D10.08c">
    <property type="gene designation" value="hsp104"/>
</dbReference>
<dbReference type="VEuPathDB" id="FungiDB:SPBC16D10.08c"/>
<dbReference type="eggNOG" id="KOG1051">
    <property type="taxonomic scope" value="Eukaryota"/>
</dbReference>
<dbReference type="HOGENOM" id="CLU_005070_4_2_1"/>
<dbReference type="InParanoid" id="O94641"/>
<dbReference type="OMA" id="ERMKAVM"/>
<dbReference type="PhylomeDB" id="O94641"/>
<dbReference type="PRO" id="PR:O94641"/>
<dbReference type="Proteomes" id="UP000002485">
    <property type="component" value="Chromosome II"/>
</dbReference>
<dbReference type="GO" id="GO:0005737">
    <property type="term" value="C:cytoplasm"/>
    <property type="evidence" value="ECO:0000314"/>
    <property type="project" value="PomBase"/>
</dbReference>
<dbReference type="GO" id="GO:0005829">
    <property type="term" value="C:cytosol"/>
    <property type="evidence" value="ECO:0007005"/>
    <property type="project" value="PomBase"/>
</dbReference>
<dbReference type="GO" id="GO:0005635">
    <property type="term" value="C:nuclear envelope"/>
    <property type="evidence" value="ECO:0007005"/>
    <property type="project" value="PomBase"/>
</dbReference>
<dbReference type="GO" id="GO:0140602">
    <property type="term" value="C:nucleolar peripheral inclusion body"/>
    <property type="evidence" value="ECO:0000314"/>
    <property type="project" value="PomBase"/>
</dbReference>
<dbReference type="GO" id="GO:0005634">
    <property type="term" value="C:nucleus"/>
    <property type="evidence" value="ECO:0000314"/>
    <property type="project" value="PomBase"/>
</dbReference>
<dbReference type="GO" id="GO:0140453">
    <property type="term" value="C:protein aggregate center"/>
    <property type="evidence" value="ECO:0000314"/>
    <property type="project" value="PomBase"/>
</dbReference>
<dbReference type="GO" id="GO:0005524">
    <property type="term" value="F:ATP binding"/>
    <property type="evidence" value="ECO:0007669"/>
    <property type="project" value="UniProtKB-KW"/>
</dbReference>
<dbReference type="GO" id="GO:0016887">
    <property type="term" value="F:ATP hydrolysis activity"/>
    <property type="evidence" value="ECO:0000318"/>
    <property type="project" value="GO_Central"/>
</dbReference>
<dbReference type="GO" id="GO:0140545">
    <property type="term" value="F:ATP-dependent protein disaggregase activity"/>
    <property type="evidence" value="ECO:0000269"/>
    <property type="project" value="PomBase"/>
</dbReference>
<dbReference type="GO" id="GO:0051787">
    <property type="term" value="F:misfolded protein binding"/>
    <property type="evidence" value="ECO:0000353"/>
    <property type="project" value="PomBase"/>
</dbReference>
<dbReference type="GO" id="GO:0051087">
    <property type="term" value="F:protein-folding chaperone binding"/>
    <property type="evidence" value="ECO:0000318"/>
    <property type="project" value="GO_Central"/>
</dbReference>
<dbReference type="GO" id="GO:0051082">
    <property type="term" value="F:unfolded protein binding"/>
    <property type="evidence" value="ECO:0000318"/>
    <property type="project" value="GO_Central"/>
</dbReference>
<dbReference type="GO" id="GO:0070370">
    <property type="term" value="P:cellular heat acclimation"/>
    <property type="evidence" value="ECO:0000315"/>
    <property type="project" value="PomBase"/>
</dbReference>
<dbReference type="GO" id="GO:0071218">
    <property type="term" value="P:cellular response to misfolded protein"/>
    <property type="evidence" value="ECO:0000315"/>
    <property type="project" value="PomBase"/>
</dbReference>
<dbReference type="GO" id="GO:0051085">
    <property type="term" value="P:chaperone cofactor-dependent protein refolding"/>
    <property type="evidence" value="ECO:0000318"/>
    <property type="project" value="GO_Central"/>
</dbReference>
<dbReference type="GO" id="GO:0030163">
    <property type="term" value="P:protein catabolic process"/>
    <property type="evidence" value="ECO:0000315"/>
    <property type="project" value="PomBase"/>
</dbReference>
<dbReference type="GO" id="GO:0042026">
    <property type="term" value="P:protein refolding"/>
    <property type="evidence" value="ECO:0000315"/>
    <property type="project" value="PomBase"/>
</dbReference>
<dbReference type="GO" id="GO:0043335">
    <property type="term" value="P:protein unfolding"/>
    <property type="evidence" value="ECO:0000314"/>
    <property type="project" value="PomBase"/>
</dbReference>
<dbReference type="CDD" id="cd00009">
    <property type="entry name" value="AAA"/>
    <property type="match status" value="1"/>
</dbReference>
<dbReference type="CDD" id="cd19499">
    <property type="entry name" value="RecA-like_ClpB_Hsp104-like"/>
    <property type="match status" value="1"/>
</dbReference>
<dbReference type="FunFam" id="3.40.50.300:FF:000120">
    <property type="entry name" value="ATP-dependent chaperone ClpB"/>
    <property type="match status" value="1"/>
</dbReference>
<dbReference type="FunFam" id="3.40.50.300:FF:000025">
    <property type="entry name" value="ATP-dependent Clp protease subunit"/>
    <property type="match status" value="1"/>
</dbReference>
<dbReference type="FunFam" id="3.40.50.300:FF:000010">
    <property type="entry name" value="Chaperone clpB 1, putative"/>
    <property type="match status" value="1"/>
</dbReference>
<dbReference type="Gene3D" id="1.10.8.60">
    <property type="match status" value="1"/>
</dbReference>
<dbReference type="Gene3D" id="1.10.1780.10">
    <property type="entry name" value="Clp, N-terminal domain"/>
    <property type="match status" value="1"/>
</dbReference>
<dbReference type="Gene3D" id="3.40.50.300">
    <property type="entry name" value="P-loop containing nucleotide triphosphate hydrolases"/>
    <property type="match status" value="3"/>
</dbReference>
<dbReference type="InterPro" id="IPR003593">
    <property type="entry name" value="AAA+_ATPase"/>
</dbReference>
<dbReference type="InterPro" id="IPR003959">
    <property type="entry name" value="ATPase_AAA_core"/>
</dbReference>
<dbReference type="InterPro" id="IPR019489">
    <property type="entry name" value="Clp_ATPase_C"/>
</dbReference>
<dbReference type="InterPro" id="IPR036628">
    <property type="entry name" value="Clp_N_dom_sf"/>
</dbReference>
<dbReference type="InterPro" id="IPR004176">
    <property type="entry name" value="Clp_R_dom"/>
</dbReference>
<dbReference type="InterPro" id="IPR001270">
    <property type="entry name" value="ClpA/B"/>
</dbReference>
<dbReference type="InterPro" id="IPR018368">
    <property type="entry name" value="ClpA/B_CS1"/>
</dbReference>
<dbReference type="InterPro" id="IPR028299">
    <property type="entry name" value="ClpA/B_CS2"/>
</dbReference>
<dbReference type="InterPro" id="IPR041546">
    <property type="entry name" value="ClpA/ClpB_AAA_lid"/>
</dbReference>
<dbReference type="InterPro" id="IPR050130">
    <property type="entry name" value="ClpA_ClpB"/>
</dbReference>
<dbReference type="InterPro" id="IPR027417">
    <property type="entry name" value="P-loop_NTPase"/>
</dbReference>
<dbReference type="PANTHER" id="PTHR11638">
    <property type="entry name" value="ATP-DEPENDENT CLP PROTEASE"/>
    <property type="match status" value="1"/>
</dbReference>
<dbReference type="PANTHER" id="PTHR11638:SF18">
    <property type="entry name" value="HEAT SHOCK PROTEIN 104"/>
    <property type="match status" value="1"/>
</dbReference>
<dbReference type="Pfam" id="PF00004">
    <property type="entry name" value="AAA"/>
    <property type="match status" value="1"/>
</dbReference>
<dbReference type="Pfam" id="PF07724">
    <property type="entry name" value="AAA_2"/>
    <property type="match status" value="1"/>
</dbReference>
<dbReference type="Pfam" id="PF17871">
    <property type="entry name" value="AAA_lid_9"/>
    <property type="match status" value="1"/>
</dbReference>
<dbReference type="Pfam" id="PF02861">
    <property type="entry name" value="Clp_N"/>
    <property type="match status" value="2"/>
</dbReference>
<dbReference type="Pfam" id="PF10431">
    <property type="entry name" value="ClpB_D2-small"/>
    <property type="match status" value="1"/>
</dbReference>
<dbReference type="PRINTS" id="PR00300">
    <property type="entry name" value="CLPPROTEASEA"/>
</dbReference>
<dbReference type="SMART" id="SM00382">
    <property type="entry name" value="AAA"/>
    <property type="match status" value="2"/>
</dbReference>
<dbReference type="SMART" id="SM01086">
    <property type="entry name" value="ClpB_D2-small"/>
    <property type="match status" value="1"/>
</dbReference>
<dbReference type="SUPFAM" id="SSF81923">
    <property type="entry name" value="Double Clp-N motif"/>
    <property type="match status" value="1"/>
</dbReference>
<dbReference type="SUPFAM" id="SSF52540">
    <property type="entry name" value="P-loop containing nucleoside triphosphate hydrolases"/>
    <property type="match status" value="2"/>
</dbReference>
<dbReference type="PROSITE" id="PS51903">
    <property type="entry name" value="CLP_R"/>
    <property type="match status" value="1"/>
</dbReference>
<dbReference type="PROSITE" id="PS00870">
    <property type="entry name" value="CLPAB_1"/>
    <property type="match status" value="1"/>
</dbReference>
<dbReference type="PROSITE" id="PS00871">
    <property type="entry name" value="CLPAB_2"/>
    <property type="match status" value="1"/>
</dbReference>
<evidence type="ECO:0000250" key="1"/>
<evidence type="ECO:0000255" key="2"/>
<evidence type="ECO:0000255" key="3">
    <source>
        <dbReference type="PROSITE-ProRule" id="PRU01251"/>
    </source>
</evidence>
<evidence type="ECO:0000256" key="4">
    <source>
        <dbReference type="SAM" id="MobiDB-lite"/>
    </source>
</evidence>
<evidence type="ECO:0000269" key="5">
    <source>
    </source>
</evidence>
<evidence type="ECO:0000305" key="6"/>
<organism>
    <name type="scientific">Schizosaccharomyces pombe (strain 972 / ATCC 24843)</name>
    <name type="common">Fission yeast</name>
    <dbReference type="NCBI Taxonomy" id="284812"/>
    <lineage>
        <taxon>Eukaryota</taxon>
        <taxon>Fungi</taxon>
        <taxon>Dikarya</taxon>
        <taxon>Ascomycota</taxon>
        <taxon>Taphrinomycotina</taxon>
        <taxon>Schizosaccharomycetes</taxon>
        <taxon>Schizosaccharomycetales</taxon>
        <taxon>Schizosaccharomycetaceae</taxon>
        <taxon>Schizosaccharomyces</taxon>
    </lineage>
</organism>
<comment type="function">
    <text evidence="1">Required, in concert with Hsp40 and Hsp70 and small Hsps, for the dissociation, resolubilization and refolding of aggregates of damaged proteins after heat or other environmental stresses. Extracts proteins from aggregates by unfolding and threading them in an ATP-dependent process through the axial channel of the protein hexamer, after which they can be refolded by components of the Hsp70/Hsp40 chaperone system (By similarity).</text>
</comment>
<comment type="subunit">
    <text evidence="1">Homohexamer, forming a ring with a central pore.</text>
</comment>
<comment type="subcellular location">
    <subcellularLocation>
        <location evidence="5">Cytoplasm</location>
    </subcellularLocation>
    <subcellularLocation>
        <location evidence="5">Nucleus</location>
    </subcellularLocation>
</comment>
<comment type="domain">
    <text evidence="1">Has 2 AAA ATPase type nucleotide-binding domains (NBDs) per monomer. ATP binding to NBD1 triggers binding of polypeptides and stimulates ATP hydrolysis at NBD2. Nucleotide binding to NBD2 is crucial for oligomerization (By similarity).</text>
</comment>
<comment type="domain">
    <text evidence="1">The C-terminal extension is involved in oligomerization.</text>
</comment>
<comment type="similarity">
    <text evidence="6">Belongs to the ClpA/ClpB family.</text>
</comment>
<reference key="1">
    <citation type="journal article" date="2002" name="Nature">
        <title>The genome sequence of Schizosaccharomyces pombe.</title>
        <authorList>
            <person name="Wood V."/>
            <person name="Gwilliam R."/>
            <person name="Rajandream M.A."/>
            <person name="Lyne M.H."/>
            <person name="Lyne R."/>
            <person name="Stewart A."/>
            <person name="Sgouros J.G."/>
            <person name="Peat N."/>
            <person name="Hayles J."/>
            <person name="Baker S.G."/>
            <person name="Basham D."/>
            <person name="Bowman S."/>
            <person name="Brooks K."/>
            <person name="Brown D."/>
            <person name="Brown S."/>
            <person name="Chillingworth T."/>
            <person name="Churcher C.M."/>
            <person name="Collins M."/>
            <person name="Connor R."/>
            <person name="Cronin A."/>
            <person name="Davis P."/>
            <person name="Feltwell T."/>
            <person name="Fraser A."/>
            <person name="Gentles S."/>
            <person name="Goble A."/>
            <person name="Hamlin N."/>
            <person name="Harris D.E."/>
            <person name="Hidalgo J."/>
            <person name="Hodgson G."/>
            <person name="Holroyd S."/>
            <person name="Hornsby T."/>
            <person name="Howarth S."/>
            <person name="Huckle E.J."/>
            <person name="Hunt S."/>
            <person name="Jagels K."/>
            <person name="James K.D."/>
            <person name="Jones L."/>
            <person name="Jones M."/>
            <person name="Leather S."/>
            <person name="McDonald S."/>
            <person name="McLean J."/>
            <person name="Mooney P."/>
            <person name="Moule S."/>
            <person name="Mungall K.L."/>
            <person name="Murphy L.D."/>
            <person name="Niblett D."/>
            <person name="Odell C."/>
            <person name="Oliver K."/>
            <person name="O'Neil S."/>
            <person name="Pearson D."/>
            <person name="Quail M.A."/>
            <person name="Rabbinowitsch E."/>
            <person name="Rutherford K.M."/>
            <person name="Rutter S."/>
            <person name="Saunders D."/>
            <person name="Seeger K."/>
            <person name="Sharp S."/>
            <person name="Skelton J."/>
            <person name="Simmonds M.N."/>
            <person name="Squares R."/>
            <person name="Squares S."/>
            <person name="Stevens K."/>
            <person name="Taylor K."/>
            <person name="Taylor R.G."/>
            <person name="Tivey A."/>
            <person name="Walsh S.V."/>
            <person name="Warren T."/>
            <person name="Whitehead S."/>
            <person name="Woodward J.R."/>
            <person name="Volckaert G."/>
            <person name="Aert R."/>
            <person name="Robben J."/>
            <person name="Grymonprez B."/>
            <person name="Weltjens I."/>
            <person name="Vanstreels E."/>
            <person name="Rieger M."/>
            <person name="Schaefer M."/>
            <person name="Mueller-Auer S."/>
            <person name="Gabel C."/>
            <person name="Fuchs M."/>
            <person name="Duesterhoeft A."/>
            <person name="Fritzc C."/>
            <person name="Holzer E."/>
            <person name="Moestl D."/>
            <person name="Hilbert H."/>
            <person name="Borzym K."/>
            <person name="Langer I."/>
            <person name="Beck A."/>
            <person name="Lehrach H."/>
            <person name="Reinhardt R."/>
            <person name="Pohl T.M."/>
            <person name="Eger P."/>
            <person name="Zimmermann W."/>
            <person name="Wedler H."/>
            <person name="Wambutt R."/>
            <person name="Purnelle B."/>
            <person name="Goffeau A."/>
            <person name="Cadieu E."/>
            <person name="Dreano S."/>
            <person name="Gloux S."/>
            <person name="Lelaure V."/>
            <person name="Mottier S."/>
            <person name="Galibert F."/>
            <person name="Aves S.J."/>
            <person name="Xiang Z."/>
            <person name="Hunt C."/>
            <person name="Moore K."/>
            <person name="Hurst S.M."/>
            <person name="Lucas M."/>
            <person name="Rochet M."/>
            <person name="Gaillardin C."/>
            <person name="Tallada V.A."/>
            <person name="Garzon A."/>
            <person name="Thode G."/>
            <person name="Daga R.R."/>
            <person name="Cruzado L."/>
            <person name="Jimenez J."/>
            <person name="Sanchez M."/>
            <person name="del Rey F."/>
            <person name="Benito J."/>
            <person name="Dominguez A."/>
            <person name="Revuelta J.L."/>
            <person name="Moreno S."/>
            <person name="Armstrong J."/>
            <person name="Forsburg S.L."/>
            <person name="Cerutti L."/>
            <person name="Lowe T."/>
            <person name="McCombie W.R."/>
            <person name="Paulsen I."/>
            <person name="Potashkin J."/>
            <person name="Shpakovski G.V."/>
            <person name="Ussery D."/>
            <person name="Barrell B.G."/>
            <person name="Nurse P."/>
        </authorList>
    </citation>
    <scope>NUCLEOTIDE SEQUENCE [LARGE SCALE GENOMIC DNA]</scope>
    <source>
        <strain>972 / ATCC 24843</strain>
    </source>
</reference>
<reference key="2">
    <citation type="journal article" date="2006" name="Nat. Biotechnol.">
        <title>ORFeome cloning and global analysis of protein localization in the fission yeast Schizosaccharomyces pombe.</title>
        <authorList>
            <person name="Matsuyama A."/>
            <person name="Arai R."/>
            <person name="Yashiroda Y."/>
            <person name="Shirai A."/>
            <person name="Kamata A."/>
            <person name="Sekido S."/>
            <person name="Kobayashi Y."/>
            <person name="Hashimoto A."/>
            <person name="Hamamoto M."/>
            <person name="Hiraoka Y."/>
            <person name="Horinouchi S."/>
            <person name="Yoshida M."/>
        </authorList>
    </citation>
    <scope>SUBCELLULAR LOCATION [LARGE SCALE ANALYSIS]</scope>
</reference>
<protein>
    <recommendedName>
        <fullName>Heat shock protein 104</fullName>
    </recommendedName>
    <alternativeName>
        <fullName>Protein aggregation-remodeling factor hsp104</fullName>
    </alternativeName>
</protein>
<sequence length="905" mass="100507">MADYPFTDKAAKTLSDAYSIAQSYGHSQLTPIHIAAALLSDSDSNGTTLLRTIVDKAGGDGQKFERSVTSRLVRLPAQDPPPEQVTLSPESAKLLRNAHELQKTQKDSYIAQDHFIAVFTKDDTLKSLLAEAGVTPKAFEFAVNNVRGNKRIDSKNAEEGFDALNKFTVDLTELARNGQLDPVIGREDEIRRTIRVLSRRTKNNPVLIGEPGVGKTSIAEGLARRIIDDDVPANLSNCKLLSLDVGSLVAGSKFRGEFEERIKSVLKEVEESETPIILFVDEMHLLMGAGSGGEGGMDAANLLKPMLARGKLHCIGATTLAEYKKYIEKDAAFERRFQIILVKEPSIEDTISILRGLKEKYEVHHGVTISDRALVTAAHLASRYLTSRRLPDSAIDLVDEAAAAVRVTRESQPEVLDNLERKLRQLRVEIRALEREKDEASKERLKAARKEAEQVEEETRPIREKYELEKSRGSELQDAKRRLDELKAKAEDAERRNDFTLAADLKYYGIPDLQKRIEYLEQQKRKADAEAIANAQPGSEPLLIDVVGPDQINEIVARWTGIPVTRLKTTEKERLLNMEKVLSKQVIGQNEAVTAVANAIRLSRAGLSDPNQPIASFLFCGPSGTGKTLLTKALASFMFDDENAMIRIDMSEYMEKHSVSRLIGAPPGYVGHEAGGQLTEQLRRRPYSVILFDEIEKAAPEVLTVLLQVLDDGRITSGQGQVVDAKNAVIIMTSNLGAEYLTTDNESDDGKIDSTTREMVMNSIRGFFRPEFLNRISSIVIFNRLRRVDIRNIVENRILEVQKRLQSNHRSIKIEVSDEAKDLLGSAGYSPAYGARPLNRVIQNQVLNPMAVLILNGQLRDKETAHVVVQNGKIFVKPNHEANANGSADIDMDGIDDDVNDEELE</sequence>
<name>HS104_SCHPO</name>